<comment type="function">
    <text evidence="1">May be involved in a process influencing telomere capping.</text>
</comment>
<comment type="subcellular location">
    <subcellularLocation>
        <location evidence="1">Vacuole</location>
    </subcellularLocation>
</comment>
<comment type="similarity">
    <text evidence="5">Belongs to the WD repeat RTC1 family.</text>
</comment>
<name>RTC1_YEAS7</name>
<reference key="1">
    <citation type="journal article" date="2007" name="Proc. Natl. Acad. Sci. U.S.A.">
        <title>Genome sequencing and comparative analysis of Saccharomyces cerevisiae strain YJM789.</title>
        <authorList>
            <person name="Wei W."/>
            <person name="McCusker J.H."/>
            <person name="Hyman R.W."/>
            <person name="Jones T."/>
            <person name="Ning Y."/>
            <person name="Cao Z."/>
            <person name="Gu Z."/>
            <person name="Bruno D."/>
            <person name="Miranda M."/>
            <person name="Nguyen M."/>
            <person name="Wilhelmy J."/>
            <person name="Komp C."/>
            <person name="Tamse R."/>
            <person name="Wang X."/>
            <person name="Jia P."/>
            <person name="Luedi P."/>
            <person name="Oefner P.J."/>
            <person name="David L."/>
            <person name="Dietrich F.S."/>
            <person name="Li Y."/>
            <person name="Davis R.W."/>
            <person name="Steinmetz L.M."/>
        </authorList>
    </citation>
    <scope>NUCLEOTIDE SEQUENCE [LARGE SCALE GENOMIC DNA]</scope>
    <source>
        <strain>YJM789</strain>
    </source>
</reference>
<gene>
    <name type="primary">RTC1</name>
    <name type="ORF">SCY_4942</name>
</gene>
<keyword id="KW-0479">Metal-binding</keyword>
<keyword id="KW-0597">Phosphoprotein</keyword>
<keyword id="KW-0677">Repeat</keyword>
<keyword id="KW-0926">Vacuole</keyword>
<keyword id="KW-0853">WD repeat</keyword>
<keyword id="KW-0862">Zinc</keyword>
<keyword id="KW-0863">Zinc-finger</keyword>
<organism>
    <name type="scientific">Saccharomyces cerevisiae (strain YJM789)</name>
    <name type="common">Baker's yeast</name>
    <dbReference type="NCBI Taxonomy" id="307796"/>
    <lineage>
        <taxon>Eukaryota</taxon>
        <taxon>Fungi</taxon>
        <taxon>Dikarya</taxon>
        <taxon>Ascomycota</taxon>
        <taxon>Saccharomycotina</taxon>
        <taxon>Saccharomycetes</taxon>
        <taxon>Saccharomycetales</taxon>
        <taxon>Saccharomycetaceae</taxon>
        <taxon>Saccharomyces</taxon>
    </lineage>
</organism>
<evidence type="ECO:0000250" key="1"/>
<evidence type="ECO:0000250" key="2">
    <source>
        <dbReference type="UniProtKB" id="Q08281"/>
    </source>
</evidence>
<evidence type="ECO:0000255" key="3">
    <source>
        <dbReference type="PROSITE-ProRule" id="PRU00175"/>
    </source>
</evidence>
<evidence type="ECO:0000256" key="4">
    <source>
        <dbReference type="SAM" id="MobiDB-lite"/>
    </source>
</evidence>
<evidence type="ECO:0000305" key="5"/>
<accession>A6ZN74</accession>
<dbReference type="EMBL" id="AAFW02000030">
    <property type="protein sequence ID" value="EDN63739.1"/>
    <property type="molecule type" value="Genomic_DNA"/>
</dbReference>
<dbReference type="SMR" id="A6ZN74"/>
<dbReference type="HOGENOM" id="CLU_008512_0_0_1"/>
<dbReference type="OrthoDB" id="37178at4893"/>
<dbReference type="Proteomes" id="UP000007060">
    <property type="component" value="Unassembled WGS sequence"/>
</dbReference>
<dbReference type="GO" id="GO:0005829">
    <property type="term" value="C:cytosol"/>
    <property type="evidence" value="ECO:0007669"/>
    <property type="project" value="TreeGrafter"/>
</dbReference>
<dbReference type="GO" id="GO:0061700">
    <property type="term" value="C:GATOR2 complex"/>
    <property type="evidence" value="ECO:0007669"/>
    <property type="project" value="TreeGrafter"/>
</dbReference>
<dbReference type="GO" id="GO:0005774">
    <property type="term" value="C:vacuolar membrane"/>
    <property type="evidence" value="ECO:0007669"/>
    <property type="project" value="TreeGrafter"/>
</dbReference>
<dbReference type="GO" id="GO:0008270">
    <property type="term" value="F:zinc ion binding"/>
    <property type="evidence" value="ECO:0007669"/>
    <property type="project" value="UniProtKB-KW"/>
</dbReference>
<dbReference type="GO" id="GO:0016239">
    <property type="term" value="P:positive regulation of macroautophagy"/>
    <property type="evidence" value="ECO:0007669"/>
    <property type="project" value="TreeGrafter"/>
</dbReference>
<dbReference type="GO" id="GO:1904263">
    <property type="term" value="P:positive regulation of TORC1 signaling"/>
    <property type="evidence" value="ECO:0007669"/>
    <property type="project" value="TreeGrafter"/>
</dbReference>
<dbReference type="CDD" id="cd16488">
    <property type="entry name" value="mRING-H2-C3H3C2_Mio-like"/>
    <property type="match status" value="1"/>
</dbReference>
<dbReference type="FunFam" id="2.130.10.10:FF:001334">
    <property type="entry name" value="Restriction of telomere capping protein 1"/>
    <property type="match status" value="1"/>
</dbReference>
<dbReference type="Gene3D" id="2.130.10.10">
    <property type="entry name" value="YVTN repeat-like/Quinoprotein amine dehydrogenase"/>
    <property type="match status" value="1"/>
</dbReference>
<dbReference type="Gene3D" id="3.30.40.10">
    <property type="entry name" value="Zinc/RING finger domain, C3HC4 (zinc finger)"/>
    <property type="match status" value="1"/>
</dbReference>
<dbReference type="InterPro" id="IPR015943">
    <property type="entry name" value="WD40/YVTN_repeat-like_dom_sf"/>
</dbReference>
<dbReference type="InterPro" id="IPR019775">
    <property type="entry name" value="WD40_repeat_CS"/>
</dbReference>
<dbReference type="InterPro" id="IPR036322">
    <property type="entry name" value="WD40_repeat_dom_sf"/>
</dbReference>
<dbReference type="InterPro" id="IPR001680">
    <property type="entry name" value="WD40_rpt"/>
</dbReference>
<dbReference type="InterPro" id="IPR037590">
    <property type="entry name" value="WDR24"/>
</dbReference>
<dbReference type="InterPro" id="IPR049566">
    <property type="entry name" value="WDR59_RTC1-like_RING_Znf"/>
</dbReference>
<dbReference type="InterPro" id="IPR001841">
    <property type="entry name" value="Znf_RING"/>
</dbReference>
<dbReference type="InterPro" id="IPR013083">
    <property type="entry name" value="Znf_RING/FYVE/PHD"/>
</dbReference>
<dbReference type="PANTHER" id="PTHR46200">
    <property type="entry name" value="GATOR COMPLEX PROTEIN WDR24"/>
    <property type="match status" value="1"/>
</dbReference>
<dbReference type="PANTHER" id="PTHR46200:SF1">
    <property type="entry name" value="GATOR COMPLEX PROTEIN WDR24"/>
    <property type="match status" value="1"/>
</dbReference>
<dbReference type="Pfam" id="PF00400">
    <property type="entry name" value="WD40"/>
    <property type="match status" value="2"/>
</dbReference>
<dbReference type="Pfam" id="PF17120">
    <property type="entry name" value="zf-RING_16"/>
    <property type="match status" value="1"/>
</dbReference>
<dbReference type="SMART" id="SM00320">
    <property type="entry name" value="WD40"/>
    <property type="match status" value="2"/>
</dbReference>
<dbReference type="SUPFAM" id="SSF57850">
    <property type="entry name" value="RING/U-box"/>
    <property type="match status" value="1"/>
</dbReference>
<dbReference type="SUPFAM" id="SSF50978">
    <property type="entry name" value="WD40 repeat-like"/>
    <property type="match status" value="1"/>
</dbReference>
<dbReference type="PROSITE" id="PS00678">
    <property type="entry name" value="WD_REPEATS_1"/>
    <property type="match status" value="1"/>
</dbReference>
<dbReference type="PROSITE" id="PS50082">
    <property type="entry name" value="WD_REPEATS_2"/>
    <property type="match status" value="2"/>
</dbReference>
<dbReference type="PROSITE" id="PS50294">
    <property type="entry name" value="WD_REPEATS_REGION"/>
    <property type="match status" value="2"/>
</dbReference>
<dbReference type="PROSITE" id="PS50089">
    <property type="entry name" value="ZF_RING_2"/>
    <property type="match status" value="1"/>
</dbReference>
<feature type="chain" id="PRO_0000408791" description="Restriction of telomere capping protein 1">
    <location>
        <begin position="1"/>
        <end position="1335"/>
    </location>
</feature>
<feature type="repeat" description="WD 1">
    <location>
        <begin position="207"/>
        <end position="248"/>
    </location>
</feature>
<feature type="repeat" description="WD 2">
    <location>
        <begin position="256"/>
        <end position="296"/>
    </location>
</feature>
<feature type="repeat" description="WD 3">
    <location>
        <begin position="305"/>
        <end position="342"/>
    </location>
</feature>
<feature type="repeat" description="WD 4">
    <location>
        <begin position="367"/>
        <end position="406"/>
    </location>
</feature>
<feature type="repeat" description="WD 5">
    <location>
        <begin position="439"/>
        <end position="486"/>
    </location>
</feature>
<feature type="repeat" description="WD 6">
    <location>
        <begin position="489"/>
        <end position="527"/>
    </location>
</feature>
<feature type="repeat" description="WD 7">
    <location>
        <begin position="844"/>
        <end position="884"/>
    </location>
</feature>
<feature type="repeat" description="WD 8">
    <location>
        <begin position="1130"/>
        <end position="1170"/>
    </location>
</feature>
<feature type="repeat" description="WD 9">
    <location>
        <begin position="1217"/>
        <end position="1256"/>
    </location>
</feature>
<feature type="zinc finger region" description="RING-type; degenerate" evidence="3">
    <location>
        <begin position="1294"/>
        <end position="1335"/>
    </location>
</feature>
<feature type="region of interest" description="Disordered" evidence="4">
    <location>
        <begin position="1"/>
        <end position="39"/>
    </location>
</feature>
<feature type="region of interest" description="Disordered" evidence="4">
    <location>
        <begin position="559"/>
        <end position="593"/>
    </location>
</feature>
<feature type="region of interest" description="Disordered" evidence="4">
    <location>
        <begin position="600"/>
        <end position="619"/>
    </location>
</feature>
<feature type="region of interest" description="Disordered" evidence="4">
    <location>
        <begin position="630"/>
        <end position="651"/>
    </location>
</feature>
<feature type="region of interest" description="Disordered" evidence="4">
    <location>
        <begin position="736"/>
        <end position="758"/>
    </location>
</feature>
<feature type="region of interest" description="Disordered" evidence="4">
    <location>
        <begin position="783"/>
        <end position="824"/>
    </location>
</feature>
<feature type="region of interest" description="Disordered" evidence="4">
    <location>
        <begin position="935"/>
        <end position="956"/>
    </location>
</feature>
<feature type="region of interest" description="Disordered" evidence="4">
    <location>
        <begin position="1007"/>
        <end position="1037"/>
    </location>
</feature>
<feature type="compositionally biased region" description="Low complexity" evidence="4">
    <location>
        <begin position="630"/>
        <end position="644"/>
    </location>
</feature>
<feature type="compositionally biased region" description="Low complexity" evidence="4">
    <location>
        <begin position="808"/>
        <end position="817"/>
    </location>
</feature>
<feature type="compositionally biased region" description="Basic and acidic residues" evidence="4">
    <location>
        <begin position="945"/>
        <end position="956"/>
    </location>
</feature>
<feature type="compositionally biased region" description="Basic and acidic residues" evidence="4">
    <location>
        <begin position="1009"/>
        <end position="1021"/>
    </location>
</feature>
<feature type="modified residue" description="Phosphoserine" evidence="2">
    <location>
        <position position="1030"/>
    </location>
</feature>
<feature type="modified residue" description="Phosphoserine" evidence="2">
    <location>
        <position position="1074"/>
    </location>
</feature>
<feature type="modified residue" description="Phosphoserine" evidence="2">
    <location>
        <position position="1081"/>
    </location>
</feature>
<feature type="modified residue" description="Phosphoserine" evidence="2">
    <location>
        <position position="1083"/>
    </location>
</feature>
<feature type="modified residue" description="Phosphoserine" evidence="2">
    <location>
        <position position="1117"/>
    </location>
</feature>
<feature type="modified residue" description="Phosphoserine" evidence="2">
    <location>
        <position position="1127"/>
    </location>
</feature>
<proteinExistence type="inferred from homology"/>
<sequence>MSLSPHVENASIPKGSTPIPKNRNVSSIGKGEFLGSSSSNNSSFRMNHYSNSGQPSVLDSIRRPNLTPTFSYSNGVYMPESHRTSSFNDSYLPYDKNPYAKTTGSMSNKSNMKIKTKKNAINTNTRKSSGLIYTTKVDKELSSIDKVNDPNINGLVCAGKTHLGLYKFSPSDRSIKCVHDFITPNSNTSTRGTTSLLPKLSKRTRQNKFSTIADVKTGFNNYKNCIAVCNNSTAISIYDLNKSSSIDNPLITSLCEHTRSINSFDFNMVESNLIISGGQDSCVKIWDLRSNKSKSSNRSDISINTASDSIRDVKWMPGYNFASKNDQGSSTYGNLKSGYKFASIHDSGYLLKFDLRQPAQYEKKLNAHTGPGLCLNWHPNQEYIATGGRDGKCCLWFVGDNANAAENTVLNYGNSPSLHAPNTSLNNSGSLAFPKLTINTGYPVTKLKFKPAYSSNIYNSLLGISSMGDEAEVRIYSLARKYIPKHVLLSETPSLGLVWWDENLIFNIDKGTRINGWDINKEPTVLENLSKNTTTWRDLDGNGLLSVDQEIGSYEVVEPELQPTSSTTCKKHPGTIKNPKNGNPENQGIIGGIKKGFSHTGLTSFTPERPPTLKAGPTFSTKSLTLASGASSFNSSSASLTSLTPQTENREEIAIEPPCIITLDIPQIFNNIRLTKIAHSRKKNVISESSSMKNSPVEKFKYLARQLKFSYIREHNVSDSADTAYKNDIENIDVVKNATETHGDNTTTTNNNDDDDDDDKIIESHLLKKYNFPENNTWATLMNEKVNNKKSKRNSSSSREFDEKDVRSSISSISASRQSHDRSRKIDKNVEAELQEKIQTLVDLISIATHNASVYLSIDDLTNFKIWILIRDSLLWDLKWMTSSQISSDNASNMDANESSDFEAGENLKTGKEFPEEDGAGTSGAESLVEERPQAFRANSDEPSDAEKKPVSKLKEQLKNTEIIPYAQPNEDSDEVLTKLKELQNQRLESRTKMGETVSDDVIIEEDEHEHQEEEQPHDSPTKSAQFHASPIAKSIPILQKREHRKSFIDTFMLHSPNGYNGDTDIGNEDDNISPRFTYNSVSPRSKVSSLQSYATTTSQLETFKKLSSHTAPIIGSPRHAPSRPDSIGREQLSSSLTKKLAKCKKIIADPPWDTKKLIKQLYNQATETGNVVLTVNILFLFQTIYQITEIDIAKDAIAHFLLLLHRYELFGIAADVLKYCPFEDIMGSEGDQSSIRLFCERCGELITNESSKEKLRAEAQQTGNKKIMDKFGYWYCDSCKKKNTSCVLCERPLKKLTMVILPCGHEGHFQCIQEWFLDENEQECPGGCPGVAFI</sequence>
<protein>
    <recommendedName>
        <fullName>Restriction of telomere capping protein 1</fullName>
    </recommendedName>
</protein>